<keyword id="KW-0025">Alternative splicing</keyword>
<keyword id="KW-0037">Angiogenesis</keyword>
<keyword id="KW-0053">Apoptosis</keyword>
<keyword id="KW-1003">Cell membrane</keyword>
<keyword id="KW-0145">Chemotaxis</keyword>
<keyword id="KW-0963">Cytoplasm</keyword>
<keyword id="KW-0217">Developmental protein</keyword>
<keyword id="KW-0221">Differentiation</keyword>
<keyword id="KW-0325">Glycoprotein</keyword>
<keyword id="KW-0472">Membrane</keyword>
<keyword id="KW-0597">Phosphoprotein</keyword>
<keyword id="KW-1185">Reference proteome</keyword>
<keyword id="KW-0732">Signal</keyword>
<keyword id="KW-0812">Transmembrane</keyword>
<keyword id="KW-1133">Transmembrane helix</keyword>
<accession>Q3TZW0</accession>
<accession>C3RSF3</accession>
<name>ECSCR_MOUSE</name>
<dbReference type="EMBL" id="EU025067">
    <property type="protein sequence ID" value="ABW05063.1"/>
    <property type="molecule type" value="mRNA"/>
</dbReference>
<dbReference type="EMBL" id="AK157485">
    <property type="protein sequence ID" value="BAE34097.1"/>
    <property type="molecule type" value="mRNA"/>
</dbReference>
<dbReference type="EMBL" id="CX567856">
    <property type="status" value="NOT_ANNOTATED_CDS"/>
    <property type="molecule type" value="mRNA"/>
</dbReference>
<dbReference type="CCDS" id="CCDS37763.1">
    <molecule id="Q3TZW0-2"/>
</dbReference>
<dbReference type="CCDS" id="CCDS89219.1">
    <molecule id="Q3TZW0-3"/>
</dbReference>
<dbReference type="RefSeq" id="NP_001028313.1">
    <molecule id="Q3TZW0-2"/>
    <property type="nucleotide sequence ID" value="NM_001033141.2"/>
</dbReference>
<dbReference type="FunCoup" id="Q3TZW0">
    <property type="interactions" value="289"/>
</dbReference>
<dbReference type="STRING" id="10090.ENSMUSP00000095223"/>
<dbReference type="GlyGen" id="Q3TZW0">
    <property type="glycosylation" value="3 sites"/>
</dbReference>
<dbReference type="iPTMnet" id="Q3TZW0"/>
<dbReference type="PhosphoSitePlus" id="Q3TZW0"/>
<dbReference type="PaxDb" id="10090-ENSMUSP00000095223"/>
<dbReference type="ProteomicsDB" id="277757">
    <molecule id="Q3TZW0-1"/>
</dbReference>
<dbReference type="ProteomicsDB" id="277758">
    <molecule id="Q3TZW0-2"/>
</dbReference>
<dbReference type="ProteomicsDB" id="277759">
    <molecule id="Q3TZW0-3"/>
</dbReference>
<dbReference type="Ensembl" id="ENSMUST00000097618.10">
    <molecule id="Q3TZW0-2"/>
    <property type="protein sequence ID" value="ENSMUSP00000095223.4"/>
    <property type="gene ID" value="ENSMUSG00000073599.11"/>
</dbReference>
<dbReference type="GeneID" id="68545"/>
<dbReference type="KEGG" id="mmu:68545"/>
<dbReference type="UCSC" id="uc008emr.1">
    <molecule id="Q3TZW0-2"/>
    <property type="organism name" value="mouse"/>
</dbReference>
<dbReference type="AGR" id="MGI:1915795"/>
<dbReference type="CTD" id="641700"/>
<dbReference type="MGI" id="MGI:1915795">
    <property type="gene designation" value="Ecscr"/>
</dbReference>
<dbReference type="VEuPathDB" id="HostDB:ENSMUSG00000073599"/>
<dbReference type="eggNOG" id="ENOG502S5MK">
    <property type="taxonomic scope" value="Eukaryota"/>
</dbReference>
<dbReference type="GeneTree" id="ENSGT00400000023549"/>
<dbReference type="InParanoid" id="Q3TZW0"/>
<dbReference type="OrthoDB" id="8960225at2759"/>
<dbReference type="PhylomeDB" id="Q3TZW0"/>
<dbReference type="TreeFam" id="TF351823"/>
<dbReference type="BioGRID-ORCS" id="68545">
    <property type="hits" value="2 hits in 77 CRISPR screens"/>
</dbReference>
<dbReference type="ChiTaRS" id="Ecscr">
    <property type="organism name" value="mouse"/>
</dbReference>
<dbReference type="PRO" id="PR:Q3TZW0"/>
<dbReference type="Proteomes" id="UP000000589">
    <property type="component" value="Chromosome 18"/>
</dbReference>
<dbReference type="RNAct" id="Q3TZW0">
    <property type="molecule type" value="protein"/>
</dbReference>
<dbReference type="Bgee" id="ENSMUSG00000073599">
    <property type="expression patterns" value="Expressed in right lung lobe and 186 other cell types or tissues"/>
</dbReference>
<dbReference type="ExpressionAtlas" id="Q3TZW0">
    <property type="expression patterns" value="baseline and differential"/>
</dbReference>
<dbReference type="GO" id="GO:0005829">
    <property type="term" value="C:cytosol"/>
    <property type="evidence" value="ECO:0000314"/>
    <property type="project" value="MGI"/>
</dbReference>
<dbReference type="GO" id="GO:0005886">
    <property type="term" value="C:plasma membrane"/>
    <property type="evidence" value="ECO:0000314"/>
    <property type="project" value="MGI"/>
</dbReference>
<dbReference type="GO" id="GO:0001525">
    <property type="term" value="P:angiogenesis"/>
    <property type="evidence" value="ECO:0007669"/>
    <property type="project" value="UniProtKB-KW"/>
</dbReference>
<dbReference type="GO" id="GO:0006915">
    <property type="term" value="P:apoptotic process"/>
    <property type="evidence" value="ECO:0007669"/>
    <property type="project" value="UniProtKB-KW"/>
</dbReference>
<dbReference type="GO" id="GO:0030154">
    <property type="term" value="P:cell differentiation"/>
    <property type="evidence" value="ECO:0007669"/>
    <property type="project" value="UniProtKB-KW"/>
</dbReference>
<dbReference type="GO" id="GO:0006935">
    <property type="term" value="P:chemotaxis"/>
    <property type="evidence" value="ECO:0007669"/>
    <property type="project" value="UniProtKB-KW"/>
</dbReference>
<dbReference type="GO" id="GO:0016525">
    <property type="term" value="P:negative regulation of angiogenesis"/>
    <property type="evidence" value="ECO:0000315"/>
    <property type="project" value="MGI"/>
</dbReference>
<dbReference type="GO" id="GO:2000353">
    <property type="term" value="P:positive regulation of endothelial cell apoptotic process"/>
    <property type="evidence" value="ECO:0000266"/>
    <property type="project" value="MGI"/>
</dbReference>
<dbReference type="GO" id="GO:1901800">
    <property type="term" value="P:positive regulation of proteasomal protein catabolic process"/>
    <property type="evidence" value="ECO:0000266"/>
    <property type="project" value="MGI"/>
</dbReference>
<dbReference type="InterPro" id="IPR026247">
    <property type="entry name" value="ECSCR"/>
</dbReference>
<dbReference type="PANTHER" id="PTHR28602">
    <property type="entry name" value="ENDOTHELIAL CELL-SPECIFIC CHEMOTAXIS REGULATOR"/>
    <property type="match status" value="1"/>
</dbReference>
<dbReference type="PANTHER" id="PTHR28602:SF1">
    <property type="entry name" value="ENDOTHELIAL CELL-SPECIFIC CHEMOTAXIS REGULATOR"/>
    <property type="match status" value="1"/>
</dbReference>
<dbReference type="Pfam" id="PF15820">
    <property type="entry name" value="ECSCR"/>
    <property type="match status" value="1"/>
</dbReference>
<dbReference type="PRINTS" id="PR02069">
    <property type="entry name" value="ECCREGULATOR"/>
</dbReference>
<protein>
    <recommendedName>
        <fullName>Endothelial cell-specific chemotaxis regulator</fullName>
    </recommendedName>
    <alternativeName>
        <fullName>Apoptosis regulator through modulating IAP expression</fullName>
        <shortName>ARIA</shortName>
    </alternativeName>
    <alternativeName>
        <fullName>Endothelial cell-specific molecule 2</fullName>
    </alternativeName>
</protein>
<organism>
    <name type="scientific">Mus musculus</name>
    <name type="common">Mouse</name>
    <dbReference type="NCBI Taxonomy" id="10090"/>
    <lineage>
        <taxon>Eukaryota</taxon>
        <taxon>Metazoa</taxon>
        <taxon>Chordata</taxon>
        <taxon>Craniata</taxon>
        <taxon>Vertebrata</taxon>
        <taxon>Euteleostomi</taxon>
        <taxon>Mammalia</taxon>
        <taxon>Eutheria</taxon>
        <taxon>Euarchontoglires</taxon>
        <taxon>Glires</taxon>
        <taxon>Rodentia</taxon>
        <taxon>Myomorpha</taxon>
        <taxon>Muroidea</taxon>
        <taxon>Muridae</taxon>
        <taxon>Murinae</taxon>
        <taxon>Mus</taxon>
        <taxon>Mus</taxon>
    </lineage>
</organism>
<comment type="function">
    <text evidence="1 4">Regulates endothelial chemotaxis and tube formation (By similarity). Has a role in angiogenesis and apoptosis via modulation of the actin cytoskeleton and facilitation of proteasomal degradation of the apoptosis inhibitors BIRC3/IAP1 and BIRC2/IAP2.</text>
</comment>
<comment type="subunit">
    <text evidence="1">Interacts with FLNA. Interacts with the 20S proteasome subunit PSMA7.</text>
</comment>
<comment type="subcellular location">
    <subcellularLocation>
        <location evidence="1">Cell membrane</location>
        <topology evidence="1">Single-pass type I membrane protein</topology>
    </subcellularLocation>
    <subcellularLocation>
        <location evidence="1">Cytoplasm</location>
    </subcellularLocation>
</comment>
<comment type="alternative products">
    <event type="alternative splicing"/>
    <isoform>
        <id>Q3TZW0-1</id>
        <name>1</name>
        <sequence type="displayed"/>
    </isoform>
    <isoform>
        <id>Q3TZW0-2</id>
        <name>2</name>
        <sequence type="described" ref="VSP_036454"/>
    </isoform>
    <isoform>
        <id>Q3TZW0-3</id>
        <name>3</name>
        <sequence type="described" ref="VSP_053880"/>
    </isoform>
</comment>
<comment type="tissue specificity">
    <text evidence="4">Expressed in all tissues examined, highest expression was observed in lung and spleen endothelial cells.</text>
</comment>
<comment type="PTM">
    <text evidence="1">May be heavily O-glycosylated.</text>
</comment>
<comment type="similarity">
    <text evidence="7">Belongs to the ECSCR family.</text>
</comment>
<proteinExistence type="evidence at protein level"/>
<gene>
    <name type="primary">Ecscr</name>
    <name type="synonym">Ecsm2</name>
</gene>
<reference key="1">
    <citation type="journal article" date="2009" name="Proc. Natl. Acad. Sci. U.S.A.">
        <title>Identification of ARIA regulating endothelial apoptosis and angiogenesis by modulating proteasomal degradation of cIAP-1 and cIAP-2.</title>
        <authorList>
            <person name="Ikeda K."/>
            <person name="Nakano R."/>
            <person name="Uraoka M."/>
            <person name="Nakagawa Y."/>
            <person name="Koide M."/>
            <person name="Katsume A."/>
            <person name="Minamino K."/>
            <person name="Yamada E."/>
            <person name="Yamada H."/>
            <person name="Quertermous T."/>
            <person name="Matsubara H."/>
        </authorList>
    </citation>
    <scope>NUCLEOTIDE SEQUENCE [MRNA] (ISOFORM 3)</scope>
    <scope>FUNCTION</scope>
    <scope>TISSUE SPECIFICITY</scope>
</reference>
<reference key="2">
    <citation type="journal article" date="2005" name="Science">
        <title>The transcriptional landscape of the mammalian genome.</title>
        <authorList>
            <person name="Carninci P."/>
            <person name="Kasukawa T."/>
            <person name="Katayama S."/>
            <person name="Gough J."/>
            <person name="Frith M.C."/>
            <person name="Maeda N."/>
            <person name="Oyama R."/>
            <person name="Ravasi T."/>
            <person name="Lenhard B."/>
            <person name="Wells C."/>
            <person name="Kodzius R."/>
            <person name="Shimokawa K."/>
            <person name="Bajic V.B."/>
            <person name="Brenner S.E."/>
            <person name="Batalov S."/>
            <person name="Forrest A.R."/>
            <person name="Zavolan M."/>
            <person name="Davis M.J."/>
            <person name="Wilming L.G."/>
            <person name="Aidinis V."/>
            <person name="Allen J.E."/>
            <person name="Ambesi-Impiombato A."/>
            <person name="Apweiler R."/>
            <person name="Aturaliya R.N."/>
            <person name="Bailey T.L."/>
            <person name="Bansal M."/>
            <person name="Baxter L."/>
            <person name="Beisel K.W."/>
            <person name="Bersano T."/>
            <person name="Bono H."/>
            <person name="Chalk A.M."/>
            <person name="Chiu K.P."/>
            <person name="Choudhary V."/>
            <person name="Christoffels A."/>
            <person name="Clutterbuck D.R."/>
            <person name="Crowe M.L."/>
            <person name="Dalla E."/>
            <person name="Dalrymple B.P."/>
            <person name="de Bono B."/>
            <person name="Della Gatta G."/>
            <person name="di Bernardo D."/>
            <person name="Down T."/>
            <person name="Engstrom P."/>
            <person name="Fagiolini M."/>
            <person name="Faulkner G."/>
            <person name="Fletcher C.F."/>
            <person name="Fukushima T."/>
            <person name="Furuno M."/>
            <person name="Futaki S."/>
            <person name="Gariboldi M."/>
            <person name="Georgii-Hemming P."/>
            <person name="Gingeras T.R."/>
            <person name="Gojobori T."/>
            <person name="Green R.E."/>
            <person name="Gustincich S."/>
            <person name="Harbers M."/>
            <person name="Hayashi Y."/>
            <person name="Hensch T.K."/>
            <person name="Hirokawa N."/>
            <person name="Hill D."/>
            <person name="Huminiecki L."/>
            <person name="Iacono M."/>
            <person name="Ikeo K."/>
            <person name="Iwama A."/>
            <person name="Ishikawa T."/>
            <person name="Jakt M."/>
            <person name="Kanapin A."/>
            <person name="Katoh M."/>
            <person name="Kawasawa Y."/>
            <person name="Kelso J."/>
            <person name="Kitamura H."/>
            <person name="Kitano H."/>
            <person name="Kollias G."/>
            <person name="Krishnan S.P."/>
            <person name="Kruger A."/>
            <person name="Kummerfeld S.K."/>
            <person name="Kurochkin I.V."/>
            <person name="Lareau L.F."/>
            <person name="Lazarevic D."/>
            <person name="Lipovich L."/>
            <person name="Liu J."/>
            <person name="Liuni S."/>
            <person name="McWilliam S."/>
            <person name="Madan Babu M."/>
            <person name="Madera M."/>
            <person name="Marchionni L."/>
            <person name="Matsuda H."/>
            <person name="Matsuzawa S."/>
            <person name="Miki H."/>
            <person name="Mignone F."/>
            <person name="Miyake S."/>
            <person name="Morris K."/>
            <person name="Mottagui-Tabar S."/>
            <person name="Mulder N."/>
            <person name="Nakano N."/>
            <person name="Nakauchi H."/>
            <person name="Ng P."/>
            <person name="Nilsson R."/>
            <person name="Nishiguchi S."/>
            <person name="Nishikawa S."/>
            <person name="Nori F."/>
            <person name="Ohara O."/>
            <person name="Okazaki Y."/>
            <person name="Orlando V."/>
            <person name="Pang K.C."/>
            <person name="Pavan W.J."/>
            <person name="Pavesi G."/>
            <person name="Pesole G."/>
            <person name="Petrovsky N."/>
            <person name="Piazza S."/>
            <person name="Reed J."/>
            <person name="Reid J.F."/>
            <person name="Ring B.Z."/>
            <person name="Ringwald M."/>
            <person name="Rost B."/>
            <person name="Ruan Y."/>
            <person name="Salzberg S.L."/>
            <person name="Sandelin A."/>
            <person name="Schneider C."/>
            <person name="Schoenbach C."/>
            <person name="Sekiguchi K."/>
            <person name="Semple C.A."/>
            <person name="Seno S."/>
            <person name="Sessa L."/>
            <person name="Sheng Y."/>
            <person name="Shibata Y."/>
            <person name="Shimada H."/>
            <person name="Shimada K."/>
            <person name="Silva D."/>
            <person name="Sinclair B."/>
            <person name="Sperling S."/>
            <person name="Stupka E."/>
            <person name="Sugiura K."/>
            <person name="Sultana R."/>
            <person name="Takenaka Y."/>
            <person name="Taki K."/>
            <person name="Tammoja K."/>
            <person name="Tan S.L."/>
            <person name="Tang S."/>
            <person name="Taylor M.S."/>
            <person name="Tegner J."/>
            <person name="Teichmann S.A."/>
            <person name="Ueda H.R."/>
            <person name="van Nimwegen E."/>
            <person name="Verardo R."/>
            <person name="Wei C.L."/>
            <person name="Yagi K."/>
            <person name="Yamanishi H."/>
            <person name="Zabarovsky E."/>
            <person name="Zhu S."/>
            <person name="Zimmer A."/>
            <person name="Hide W."/>
            <person name="Bult C."/>
            <person name="Grimmond S.M."/>
            <person name="Teasdale R.D."/>
            <person name="Liu E.T."/>
            <person name="Brusic V."/>
            <person name="Quackenbush J."/>
            <person name="Wahlestedt C."/>
            <person name="Mattick J.S."/>
            <person name="Hume D.A."/>
            <person name="Kai C."/>
            <person name="Sasaki D."/>
            <person name="Tomaru Y."/>
            <person name="Fukuda S."/>
            <person name="Kanamori-Katayama M."/>
            <person name="Suzuki M."/>
            <person name="Aoki J."/>
            <person name="Arakawa T."/>
            <person name="Iida J."/>
            <person name="Imamura K."/>
            <person name="Itoh M."/>
            <person name="Kato T."/>
            <person name="Kawaji H."/>
            <person name="Kawagashira N."/>
            <person name="Kawashima T."/>
            <person name="Kojima M."/>
            <person name="Kondo S."/>
            <person name="Konno H."/>
            <person name="Nakano K."/>
            <person name="Ninomiya N."/>
            <person name="Nishio T."/>
            <person name="Okada M."/>
            <person name="Plessy C."/>
            <person name="Shibata K."/>
            <person name="Shiraki T."/>
            <person name="Suzuki S."/>
            <person name="Tagami M."/>
            <person name="Waki K."/>
            <person name="Watahiki A."/>
            <person name="Okamura-Oho Y."/>
            <person name="Suzuki H."/>
            <person name="Kawai J."/>
            <person name="Hayashizaki Y."/>
        </authorList>
    </citation>
    <scope>NUCLEOTIDE SEQUENCE [LARGE SCALE MRNA] (ISOFORM 2)</scope>
    <source>
        <strain>NOD</strain>
        <tissue>Spleen</tissue>
    </source>
</reference>
<reference key="3">
    <citation type="journal article" date="2004" name="Genome Res.">
        <title>The status, quality, and expansion of the NIH full-length cDNA project: the Mammalian Gene Collection (MGC).</title>
        <authorList>
            <consortium name="The MGC Project Team"/>
        </authorList>
    </citation>
    <scope>NUCLEOTIDE SEQUENCE [LARGE SCALE MRNA] (ISOFORM 1)</scope>
</reference>
<reference key="4">
    <citation type="journal article" date="2010" name="Cell">
        <title>A tissue-specific atlas of mouse protein phosphorylation and expression.</title>
        <authorList>
            <person name="Huttlin E.L."/>
            <person name="Jedrychowski M.P."/>
            <person name="Elias J.E."/>
            <person name="Goswami T."/>
            <person name="Rad R."/>
            <person name="Beausoleil S.A."/>
            <person name="Villen J."/>
            <person name="Haas W."/>
            <person name="Sowa M.E."/>
            <person name="Gygi S.P."/>
        </authorList>
    </citation>
    <scope>PHOSPHORYLATION [LARGE SCALE ANALYSIS] AT SER-204 AND SER-207</scope>
    <scope>IDENTIFICATION BY MASS SPECTROMETRY [LARGE SCALE ANALYSIS]</scope>
    <source>
        <tissue>Kidney</tissue>
    </source>
</reference>
<feature type="signal peptide" evidence="2">
    <location>
        <begin position="1"/>
        <end position="18"/>
    </location>
</feature>
<feature type="chain" id="PRO_0000365018" description="Endothelial cell-specific chemotaxis regulator">
    <location>
        <begin position="19"/>
        <end position="214"/>
    </location>
</feature>
<feature type="topological domain" description="Extracellular" evidence="2">
    <location>
        <begin position="19"/>
        <end position="130"/>
    </location>
</feature>
<feature type="transmembrane region" description="Helical" evidence="2">
    <location>
        <begin position="131"/>
        <end position="151"/>
    </location>
</feature>
<feature type="topological domain" description="Cytoplasmic" evidence="2">
    <location>
        <begin position="152"/>
        <end position="214"/>
    </location>
</feature>
<feature type="region of interest" description="Disordered" evidence="3">
    <location>
        <begin position="23"/>
        <end position="107"/>
    </location>
</feature>
<feature type="region of interest" description="Disordered" evidence="3">
    <location>
        <begin position="163"/>
        <end position="184"/>
    </location>
</feature>
<feature type="compositionally biased region" description="Polar residues" evidence="3">
    <location>
        <begin position="28"/>
        <end position="57"/>
    </location>
</feature>
<feature type="compositionally biased region" description="Low complexity" evidence="3">
    <location>
        <begin position="80"/>
        <end position="90"/>
    </location>
</feature>
<feature type="compositionally biased region" description="Polar residues" evidence="3">
    <location>
        <begin position="172"/>
        <end position="184"/>
    </location>
</feature>
<feature type="modified residue" description="Phosphoserine" evidence="8">
    <location>
        <position position="204"/>
    </location>
</feature>
<feature type="modified residue" description="Phosphoserine" evidence="8">
    <location>
        <position position="207"/>
    </location>
</feature>
<feature type="splice variant" id="VSP_036454" description="In isoform 2." evidence="5">
    <original>MRLGSAILGLLLLQ</original>
    <variation>MLRDISLEAHGLGSTLTPLLAHQLPQGRVR</variation>
    <location>
        <begin position="1"/>
        <end position="14"/>
    </location>
</feature>
<feature type="splice variant" id="VSP_053880" description="In isoform 3." evidence="6">
    <original>M</original>
    <variation>MDREYTEEPATHPADLGTRGAM</variation>
    <location>
        <position position="1"/>
    </location>
</feature>
<sequence>MRLGSAILGLLLLQGYSSQPTTTQTSQEILQKSSQVSLVSNQPVTPRSSTMDKQSLSLPDLMSFQPQKHTLGPGTGTPERSSSSSSSSSSRRGEASLDATPSPETTSLQTKKMTILLTILPTPTSESVLTVAAFGVISFIVILVVVVIILVSVVSLRFKCRKNKESEDPQKPGSSGLSESCSTANGEKDSITLISMRNINVNNSKGSMSAEKIL</sequence>
<evidence type="ECO:0000250" key="1"/>
<evidence type="ECO:0000255" key="2"/>
<evidence type="ECO:0000256" key="3">
    <source>
        <dbReference type="SAM" id="MobiDB-lite"/>
    </source>
</evidence>
<evidence type="ECO:0000269" key="4">
    <source>
    </source>
</evidence>
<evidence type="ECO:0000303" key="5">
    <source>
    </source>
</evidence>
<evidence type="ECO:0000303" key="6">
    <source>
    </source>
</evidence>
<evidence type="ECO:0000305" key="7"/>
<evidence type="ECO:0007744" key="8">
    <source>
    </source>
</evidence>